<comment type="function">
    <text evidence="1">Catalyzes the conversion of acetate into acetyl-CoA (AcCoA), an essential intermediate at the junction of anabolic and catabolic pathways. AcsA undergoes a two-step reaction. In the first half reaction, AcsA combines acetate with ATP to form acetyl-adenylate (AcAMP) intermediate. In the second half reaction, it can then transfer the acetyl group from AcAMP to the sulfhydryl group of CoA, forming the product AcCoA.</text>
</comment>
<comment type="catalytic activity">
    <reaction evidence="1">
        <text>acetate + ATP + CoA = acetyl-CoA + AMP + diphosphate</text>
        <dbReference type="Rhea" id="RHEA:23176"/>
        <dbReference type="ChEBI" id="CHEBI:30089"/>
        <dbReference type="ChEBI" id="CHEBI:30616"/>
        <dbReference type="ChEBI" id="CHEBI:33019"/>
        <dbReference type="ChEBI" id="CHEBI:57287"/>
        <dbReference type="ChEBI" id="CHEBI:57288"/>
        <dbReference type="ChEBI" id="CHEBI:456215"/>
        <dbReference type="EC" id="6.2.1.1"/>
    </reaction>
</comment>
<comment type="cofactor">
    <cofactor evidence="1">
        <name>Mg(2+)</name>
        <dbReference type="ChEBI" id="CHEBI:18420"/>
    </cofactor>
</comment>
<comment type="PTM">
    <text evidence="1">Acetylated. Deacetylation by the SIR2-homolog deacetylase activates the enzyme.</text>
</comment>
<comment type="similarity">
    <text evidence="1">Belongs to the ATP-dependent AMP-binding enzyme family.</text>
</comment>
<organism>
    <name type="scientific">Pseudomonas aeruginosa (strain ATCC 15692 / DSM 22644 / CIP 104116 / JCM 14847 / LMG 12228 / 1C / PRS 101 / PAO1)</name>
    <dbReference type="NCBI Taxonomy" id="208964"/>
    <lineage>
        <taxon>Bacteria</taxon>
        <taxon>Pseudomonadati</taxon>
        <taxon>Pseudomonadota</taxon>
        <taxon>Gammaproteobacteria</taxon>
        <taxon>Pseudomonadales</taxon>
        <taxon>Pseudomonadaceae</taxon>
        <taxon>Pseudomonas</taxon>
    </lineage>
</organism>
<proteinExistence type="inferred from homology"/>
<keyword id="KW-0007">Acetylation</keyword>
<keyword id="KW-0067">ATP-binding</keyword>
<keyword id="KW-0436">Ligase</keyword>
<keyword id="KW-0460">Magnesium</keyword>
<keyword id="KW-0479">Metal-binding</keyword>
<keyword id="KW-0547">Nucleotide-binding</keyword>
<keyword id="KW-1185">Reference proteome</keyword>
<gene>
    <name evidence="1" type="primary">acsA2</name>
    <name type="synonym">acsB</name>
    <name type="ordered locus">PA4733</name>
</gene>
<sequence>MFEISVHPVPDAVRQRAYLNDDDYQRLYRQSVENPDEFWGEQAKAFLDWFKPWHSVHHGDLRKGQATWFKGGQLNVAYNCIDRHLERRGEQIAIVWEGDNPSESAHITYRKLHHNVCRLANVLKSRGVEKGDRVCIYMPMIPEAAYAMLACARIGAVHSVVFGGFSPDSLRDRILDADCRTVITADEGVRGGKYIPLKQNVEKALKDCPDVSTVVVVERTQGDIPWVEGRDIWYHEALHAASADCPAEAMDAEDPLFILYTSGSTGKPKGVLHTTGGYLLGAAMTHKYVFDYHDGDVYWCTADVGWVTGHSYIVYGPLANGATTLMFEGVPNYPDASRFWQVIDKHQVNIFYTAPTAIRALMREGDAPVRQTSRSSLRLLGSVGEPINPEAWEWYYQVVGEKRCPILDTWWQTETGSILITPLPGATALKPGSATRPFFGVQPVLLDEKGKEIDGAGSGVLAIKASWPSQIRSVYGDHQRMIDTYFKPYPGYYFSGDGARRDEDGYYWITGRVDDVINVSGHRIGTAEVESALVLHDAVAEAAVVGCPHDVKGQAIYAFVTLMAGSQPSEALQQELLALVGKEIGSFAKPDHLQWAPSLPKTRSGKIMRRILRKIACNELDSLGDTSTLADPGVVQGLIDNRLNR</sequence>
<reference key="1">
    <citation type="journal article" date="2000" name="Nature">
        <title>Complete genome sequence of Pseudomonas aeruginosa PAO1, an opportunistic pathogen.</title>
        <authorList>
            <person name="Stover C.K."/>
            <person name="Pham X.-Q.T."/>
            <person name="Erwin A.L."/>
            <person name="Mizoguchi S.D."/>
            <person name="Warrener P."/>
            <person name="Hickey M.J."/>
            <person name="Brinkman F.S.L."/>
            <person name="Hufnagle W.O."/>
            <person name="Kowalik D.J."/>
            <person name="Lagrou M."/>
            <person name="Garber R.L."/>
            <person name="Goltry L."/>
            <person name="Tolentino E."/>
            <person name="Westbrock-Wadman S."/>
            <person name="Yuan Y."/>
            <person name="Brody L.L."/>
            <person name="Coulter S.N."/>
            <person name="Folger K.R."/>
            <person name="Kas A."/>
            <person name="Larbig K."/>
            <person name="Lim R.M."/>
            <person name="Smith K.A."/>
            <person name="Spencer D.H."/>
            <person name="Wong G.K.-S."/>
            <person name="Wu Z."/>
            <person name="Paulsen I.T."/>
            <person name="Reizer J."/>
            <person name="Saier M.H. Jr."/>
            <person name="Hancock R.E.W."/>
            <person name="Lory S."/>
            <person name="Olson M.V."/>
        </authorList>
    </citation>
    <scope>NUCLEOTIDE SEQUENCE [LARGE SCALE GENOMIC DNA]</scope>
    <source>
        <strain>ATCC 15692 / DSM 22644 / CIP 104116 / JCM 14847 / LMG 12228 / 1C / PRS 101 / PAO1</strain>
    </source>
</reference>
<protein>
    <recommendedName>
        <fullName evidence="1">Acetyl-coenzyme A synthetase 2</fullName>
        <shortName evidence="1">AcCoA synthetase 2</shortName>
        <shortName evidence="1">Acs 2</shortName>
        <ecNumber evidence="1">6.2.1.1</ecNumber>
    </recommendedName>
    <alternativeName>
        <fullName evidence="1">Acetate--CoA ligase 2</fullName>
    </alternativeName>
    <alternativeName>
        <fullName evidence="1">Acyl-activating enzyme 2</fullName>
    </alternativeName>
</protein>
<evidence type="ECO:0000255" key="1">
    <source>
        <dbReference type="HAMAP-Rule" id="MF_01123"/>
    </source>
</evidence>
<dbReference type="EC" id="6.2.1.1" evidence="1"/>
<dbReference type="EMBL" id="AE004091">
    <property type="protein sequence ID" value="AAG08119.1"/>
    <property type="molecule type" value="Genomic_DNA"/>
</dbReference>
<dbReference type="PIR" id="A83054">
    <property type="entry name" value="A83054"/>
</dbReference>
<dbReference type="RefSeq" id="NP_253421.1">
    <property type="nucleotide sequence ID" value="NC_002516.2"/>
</dbReference>
<dbReference type="SMR" id="Q9HV66"/>
<dbReference type="STRING" id="208964.PA4733"/>
<dbReference type="PaxDb" id="208964-PA4733"/>
<dbReference type="GeneID" id="881650"/>
<dbReference type="KEGG" id="pae:PA4733"/>
<dbReference type="PATRIC" id="fig|208964.12.peg.4958"/>
<dbReference type="PseudoCAP" id="PA4733"/>
<dbReference type="HOGENOM" id="CLU_000022_3_6_6"/>
<dbReference type="InParanoid" id="Q9HV66"/>
<dbReference type="OrthoDB" id="9803968at2"/>
<dbReference type="PhylomeDB" id="Q9HV66"/>
<dbReference type="BioCyc" id="PAER208964:G1FZ6-4843-MONOMER"/>
<dbReference type="Proteomes" id="UP000002438">
    <property type="component" value="Chromosome"/>
</dbReference>
<dbReference type="GO" id="GO:0005829">
    <property type="term" value="C:cytosol"/>
    <property type="evidence" value="ECO:0000318"/>
    <property type="project" value="GO_Central"/>
</dbReference>
<dbReference type="GO" id="GO:0003987">
    <property type="term" value="F:acetate-CoA ligase activity"/>
    <property type="evidence" value="ECO:0000318"/>
    <property type="project" value="GO_Central"/>
</dbReference>
<dbReference type="GO" id="GO:0016208">
    <property type="term" value="F:AMP binding"/>
    <property type="evidence" value="ECO:0007669"/>
    <property type="project" value="InterPro"/>
</dbReference>
<dbReference type="GO" id="GO:0005524">
    <property type="term" value="F:ATP binding"/>
    <property type="evidence" value="ECO:0007669"/>
    <property type="project" value="UniProtKB-KW"/>
</dbReference>
<dbReference type="GO" id="GO:0046872">
    <property type="term" value="F:metal ion binding"/>
    <property type="evidence" value="ECO:0007669"/>
    <property type="project" value="UniProtKB-KW"/>
</dbReference>
<dbReference type="GO" id="GO:0006085">
    <property type="term" value="P:acetyl-CoA biosynthetic process"/>
    <property type="evidence" value="ECO:0000318"/>
    <property type="project" value="GO_Central"/>
</dbReference>
<dbReference type="GO" id="GO:0019427">
    <property type="term" value="P:acetyl-CoA biosynthetic process from acetate"/>
    <property type="evidence" value="ECO:0007669"/>
    <property type="project" value="InterPro"/>
</dbReference>
<dbReference type="CDD" id="cd05966">
    <property type="entry name" value="ACS"/>
    <property type="match status" value="1"/>
</dbReference>
<dbReference type="FunFam" id="3.30.300.30:FF:000004">
    <property type="entry name" value="Acetyl-coenzyme A synthetase"/>
    <property type="match status" value="1"/>
</dbReference>
<dbReference type="FunFam" id="3.40.50.12780:FF:000001">
    <property type="entry name" value="Acetyl-coenzyme A synthetase"/>
    <property type="match status" value="1"/>
</dbReference>
<dbReference type="Gene3D" id="3.30.300.30">
    <property type="match status" value="1"/>
</dbReference>
<dbReference type="Gene3D" id="3.40.50.12780">
    <property type="entry name" value="N-terminal domain of ligase-like"/>
    <property type="match status" value="1"/>
</dbReference>
<dbReference type="HAMAP" id="MF_01123">
    <property type="entry name" value="Ac_CoA_synth"/>
    <property type="match status" value="1"/>
</dbReference>
<dbReference type="InterPro" id="IPR011904">
    <property type="entry name" value="Ac_CoA_lig"/>
</dbReference>
<dbReference type="InterPro" id="IPR032387">
    <property type="entry name" value="ACAS_N"/>
</dbReference>
<dbReference type="InterPro" id="IPR025110">
    <property type="entry name" value="AMP-bd_C"/>
</dbReference>
<dbReference type="InterPro" id="IPR045851">
    <property type="entry name" value="AMP-bd_C_sf"/>
</dbReference>
<dbReference type="InterPro" id="IPR020845">
    <property type="entry name" value="AMP-binding_CS"/>
</dbReference>
<dbReference type="InterPro" id="IPR000873">
    <property type="entry name" value="AMP-dep_synth/lig_dom"/>
</dbReference>
<dbReference type="InterPro" id="IPR042099">
    <property type="entry name" value="ANL_N_sf"/>
</dbReference>
<dbReference type="NCBIfam" id="TIGR02188">
    <property type="entry name" value="Ac_CoA_lig_AcsA"/>
    <property type="match status" value="1"/>
</dbReference>
<dbReference type="NCBIfam" id="NF001208">
    <property type="entry name" value="PRK00174.1"/>
    <property type="match status" value="1"/>
</dbReference>
<dbReference type="PANTHER" id="PTHR24095">
    <property type="entry name" value="ACETYL-COENZYME A SYNTHETASE"/>
    <property type="match status" value="1"/>
</dbReference>
<dbReference type="PANTHER" id="PTHR24095:SF14">
    <property type="entry name" value="ACETYL-COENZYME A SYNTHETASE 1"/>
    <property type="match status" value="1"/>
</dbReference>
<dbReference type="Pfam" id="PF16177">
    <property type="entry name" value="ACAS_N"/>
    <property type="match status" value="1"/>
</dbReference>
<dbReference type="Pfam" id="PF00501">
    <property type="entry name" value="AMP-binding"/>
    <property type="match status" value="1"/>
</dbReference>
<dbReference type="Pfam" id="PF13193">
    <property type="entry name" value="AMP-binding_C"/>
    <property type="match status" value="1"/>
</dbReference>
<dbReference type="SUPFAM" id="SSF56801">
    <property type="entry name" value="Acetyl-CoA synthetase-like"/>
    <property type="match status" value="1"/>
</dbReference>
<dbReference type="PROSITE" id="PS00455">
    <property type="entry name" value="AMP_BINDING"/>
    <property type="match status" value="1"/>
</dbReference>
<name>ACSA2_PSEAE</name>
<feature type="chain" id="PRO_0000208375" description="Acetyl-coenzyme A synthetase 2">
    <location>
        <begin position="1"/>
        <end position="645"/>
    </location>
</feature>
<feature type="binding site" evidence="1">
    <location>
        <begin position="190"/>
        <end position="193"/>
    </location>
    <ligand>
        <name>CoA</name>
        <dbReference type="ChEBI" id="CHEBI:57287"/>
    </ligand>
</feature>
<feature type="binding site" evidence="1">
    <location>
        <position position="308"/>
    </location>
    <ligand>
        <name>CoA</name>
        <dbReference type="ChEBI" id="CHEBI:57287"/>
    </ligand>
</feature>
<feature type="binding site" evidence="1">
    <location>
        <position position="332"/>
    </location>
    <ligand>
        <name>CoA</name>
        <dbReference type="ChEBI" id="CHEBI:57287"/>
    </ligand>
</feature>
<feature type="binding site" evidence="1">
    <location>
        <begin position="384"/>
        <end position="386"/>
    </location>
    <ligand>
        <name>ATP</name>
        <dbReference type="ChEBI" id="CHEBI:30616"/>
    </ligand>
</feature>
<feature type="binding site" evidence="1">
    <location>
        <begin position="408"/>
        <end position="413"/>
    </location>
    <ligand>
        <name>ATP</name>
        <dbReference type="ChEBI" id="CHEBI:30616"/>
    </ligand>
</feature>
<feature type="binding site" evidence="1">
    <location>
        <position position="497"/>
    </location>
    <ligand>
        <name>ATP</name>
        <dbReference type="ChEBI" id="CHEBI:30616"/>
    </ligand>
</feature>
<feature type="binding site" evidence="1">
    <location>
        <position position="512"/>
    </location>
    <ligand>
        <name>ATP</name>
        <dbReference type="ChEBI" id="CHEBI:30616"/>
    </ligand>
</feature>
<feature type="binding site" evidence="1">
    <location>
        <position position="520"/>
    </location>
    <ligand>
        <name>CoA</name>
        <dbReference type="ChEBI" id="CHEBI:57287"/>
    </ligand>
</feature>
<feature type="binding site" evidence="1">
    <location>
        <position position="523"/>
    </location>
    <ligand>
        <name>ATP</name>
        <dbReference type="ChEBI" id="CHEBI:30616"/>
    </ligand>
</feature>
<feature type="binding site" evidence="1">
    <location>
        <position position="534"/>
    </location>
    <ligand>
        <name>Mg(2+)</name>
        <dbReference type="ChEBI" id="CHEBI:18420"/>
    </ligand>
</feature>
<feature type="binding site" evidence="1">
    <location>
        <position position="536"/>
    </location>
    <ligand>
        <name>Mg(2+)</name>
        <dbReference type="ChEBI" id="CHEBI:18420"/>
    </ligand>
</feature>
<feature type="binding site" evidence="1">
    <location>
        <position position="539"/>
    </location>
    <ligand>
        <name>Mg(2+)</name>
        <dbReference type="ChEBI" id="CHEBI:18420"/>
    </ligand>
</feature>
<feature type="modified residue" description="N6-acetyllysine" evidence="1">
    <location>
        <position position="606"/>
    </location>
</feature>
<accession>Q9HV66</accession>